<proteinExistence type="evidence at protein level"/>
<sequence length="293" mass="31402">MAIVSAEKFVQAARDNGYAVGGFNTNNLEWTQAILRAAEAKKAPVLIQTSMGAAKYMGGYKVARNLIANLVESMGITVPVAIHLDHGHYEDALECIEVGYTSIMFDGSHLPVEENLKLAKEVVEKAHAKGISVEAEVGTIGGEEDGIIGKGELAPIEDAKAMVETGIDFLAAGIGNIHGPYPVNWEGLDLDHLQKLTEALPGFPIVLHGGSGIPDEQIQAAIKLGVAKVNVNTECQIAFANATRKFARDYEANEAEYDKKKLFDPRKFLADGVKAIQASVEERIDVFGSEGKA</sequence>
<dbReference type="EC" id="4.1.2.13"/>
<dbReference type="EMBL" id="AJ005697">
    <property type="protein sequence ID" value="CAA06682.1"/>
    <property type="molecule type" value="Genomic_DNA"/>
</dbReference>
<dbReference type="EMBL" id="AE007317">
    <property type="protein sequence ID" value="AAK99334.1"/>
    <property type="molecule type" value="Genomic_DNA"/>
</dbReference>
<dbReference type="PIR" id="B97938">
    <property type="entry name" value="B97938"/>
</dbReference>
<dbReference type="RefSeq" id="NP_358124.1">
    <property type="nucleotide sequence ID" value="NC_003098.1"/>
</dbReference>
<dbReference type="RefSeq" id="WP_001019003.1">
    <property type="nucleotide sequence ID" value="NC_003098.1"/>
</dbReference>
<dbReference type="SMR" id="P0A4S2"/>
<dbReference type="STRING" id="171101.spr0530"/>
<dbReference type="MoonProt" id="P0A4S2"/>
<dbReference type="KEGG" id="spr:spr0530"/>
<dbReference type="PATRIC" id="fig|171101.6.peg.582"/>
<dbReference type="eggNOG" id="COG0191">
    <property type="taxonomic scope" value="Bacteria"/>
</dbReference>
<dbReference type="HOGENOM" id="CLU_040088_0_1_9"/>
<dbReference type="UniPathway" id="UPA00109">
    <property type="reaction ID" value="UER00183"/>
</dbReference>
<dbReference type="Proteomes" id="UP000000586">
    <property type="component" value="Chromosome"/>
</dbReference>
<dbReference type="GO" id="GO:0004332">
    <property type="term" value="F:fructose-bisphosphate aldolase activity"/>
    <property type="evidence" value="ECO:0007669"/>
    <property type="project" value="UniProtKB-EC"/>
</dbReference>
<dbReference type="GO" id="GO:0008270">
    <property type="term" value="F:zinc ion binding"/>
    <property type="evidence" value="ECO:0007669"/>
    <property type="project" value="InterPro"/>
</dbReference>
<dbReference type="GO" id="GO:0030388">
    <property type="term" value="P:fructose 1,6-bisphosphate metabolic process"/>
    <property type="evidence" value="ECO:0007669"/>
    <property type="project" value="InterPro"/>
</dbReference>
<dbReference type="GO" id="GO:0006096">
    <property type="term" value="P:glycolytic process"/>
    <property type="evidence" value="ECO:0007669"/>
    <property type="project" value="UniProtKB-UniPathway"/>
</dbReference>
<dbReference type="CDD" id="cd00947">
    <property type="entry name" value="TBP_aldolase_IIB"/>
    <property type="match status" value="1"/>
</dbReference>
<dbReference type="FunFam" id="3.20.20.70:FF:000111">
    <property type="entry name" value="Fructose-1,6-bisphosphate aldolase"/>
    <property type="match status" value="1"/>
</dbReference>
<dbReference type="Gene3D" id="3.20.20.70">
    <property type="entry name" value="Aldolase class I"/>
    <property type="match status" value="1"/>
</dbReference>
<dbReference type="InterPro" id="IPR013785">
    <property type="entry name" value="Aldolase_TIM"/>
</dbReference>
<dbReference type="InterPro" id="IPR050246">
    <property type="entry name" value="Class_II_FBP_aldolase"/>
</dbReference>
<dbReference type="InterPro" id="IPR000771">
    <property type="entry name" value="FBA_II"/>
</dbReference>
<dbReference type="InterPro" id="IPR011289">
    <property type="entry name" value="Fruc_bis_ald_class-2"/>
</dbReference>
<dbReference type="NCBIfam" id="TIGR00167">
    <property type="entry name" value="cbbA"/>
    <property type="match status" value="1"/>
</dbReference>
<dbReference type="NCBIfam" id="TIGR01859">
    <property type="entry name" value="fruc_bis_ald"/>
    <property type="match status" value="1"/>
</dbReference>
<dbReference type="NCBIfam" id="NF005590">
    <property type="entry name" value="PRK07315.1"/>
    <property type="match status" value="1"/>
</dbReference>
<dbReference type="PANTHER" id="PTHR30304">
    <property type="entry name" value="D-TAGATOSE-1,6-BISPHOSPHATE ALDOLASE"/>
    <property type="match status" value="1"/>
</dbReference>
<dbReference type="PANTHER" id="PTHR30304:SF0">
    <property type="entry name" value="D-TAGATOSE-1,6-BISPHOSPHATE ALDOLASE SUBUNIT GATY-RELATED"/>
    <property type="match status" value="1"/>
</dbReference>
<dbReference type="Pfam" id="PF01116">
    <property type="entry name" value="F_bP_aldolase"/>
    <property type="match status" value="1"/>
</dbReference>
<dbReference type="PIRSF" id="PIRSF001359">
    <property type="entry name" value="F_bP_aldolase_II"/>
    <property type="match status" value="1"/>
</dbReference>
<dbReference type="SUPFAM" id="SSF51569">
    <property type="entry name" value="Aldolase"/>
    <property type="match status" value="1"/>
</dbReference>
<dbReference type="PROSITE" id="PS00602">
    <property type="entry name" value="ALDOLASE_CLASS_II_1"/>
    <property type="match status" value="1"/>
</dbReference>
<dbReference type="PROSITE" id="PS00806">
    <property type="entry name" value="ALDOLASE_CLASS_II_2"/>
    <property type="match status" value="1"/>
</dbReference>
<evidence type="ECO:0000250" key="1"/>
<evidence type="ECO:0000269" key="2">
    <source>
    </source>
</evidence>
<evidence type="ECO:0000305" key="3"/>
<feature type="chain" id="PRO_0000178746" description="Fructose-bisphosphate aldolase">
    <location>
        <begin position="1"/>
        <end position="293"/>
    </location>
</feature>
<feature type="active site" description="Proton donor" evidence="1">
    <location>
        <position position="85"/>
    </location>
</feature>
<feature type="binding site" evidence="1">
    <location>
        <position position="50"/>
    </location>
    <ligand>
        <name>D-glyceraldehyde 3-phosphate</name>
        <dbReference type="ChEBI" id="CHEBI:59776"/>
    </ligand>
</feature>
<feature type="binding site" evidence="1">
    <location>
        <position position="86"/>
    </location>
    <ligand>
        <name>Zn(2+)</name>
        <dbReference type="ChEBI" id="CHEBI:29105"/>
        <label>1</label>
        <note>catalytic</note>
    </ligand>
</feature>
<feature type="binding site" evidence="1">
    <location>
        <position position="106"/>
    </location>
    <ligand>
        <name>Zn(2+)</name>
        <dbReference type="ChEBI" id="CHEBI:29105"/>
        <label>2</label>
    </ligand>
</feature>
<feature type="binding site" evidence="1">
    <location>
        <position position="136"/>
    </location>
    <ligand>
        <name>Zn(2+)</name>
        <dbReference type="ChEBI" id="CHEBI:29105"/>
        <label>2</label>
    </ligand>
</feature>
<feature type="binding site" evidence="1">
    <location>
        <position position="178"/>
    </location>
    <ligand>
        <name>Zn(2+)</name>
        <dbReference type="ChEBI" id="CHEBI:29105"/>
        <label>1</label>
        <note>catalytic</note>
    </ligand>
</feature>
<feature type="binding site" evidence="1">
    <location>
        <position position="179"/>
    </location>
    <ligand>
        <name>dihydroxyacetone phosphate</name>
        <dbReference type="ChEBI" id="CHEBI:57642"/>
    </ligand>
</feature>
<feature type="binding site" evidence="1">
    <location>
        <position position="208"/>
    </location>
    <ligand>
        <name>Zn(2+)</name>
        <dbReference type="ChEBI" id="CHEBI:29105"/>
        <label>1</label>
        <note>catalytic</note>
    </ligand>
</feature>
<feature type="binding site" evidence="1">
    <location>
        <begin position="209"/>
        <end position="211"/>
    </location>
    <ligand>
        <name>dihydroxyacetone phosphate</name>
        <dbReference type="ChEBI" id="CHEBI:57642"/>
    </ligand>
</feature>
<feature type="binding site" evidence="1">
    <location>
        <begin position="230"/>
        <end position="233"/>
    </location>
    <ligand>
        <name>dihydroxyacetone phosphate</name>
        <dbReference type="ChEBI" id="CHEBI:57642"/>
    </ligand>
</feature>
<name>ALF_STRR6</name>
<protein>
    <recommendedName>
        <fullName>Fructose-bisphosphate aldolase</fullName>
        <shortName>FBP aldolase</shortName>
        <shortName>FBPA</shortName>
        <ecNumber>4.1.2.13</ecNumber>
    </recommendedName>
    <alternativeName>
        <fullName>Fructose-1,6-bisphosphate aldolase</fullName>
    </alternativeName>
</protein>
<reference key="1">
    <citation type="journal article" date="1999" name="Curr. Microbiol.">
        <title>Cloning, sequencing, and chromosomal location of a putative class-II aldolase gene from Streptococcus pneumoniae.</title>
        <authorList>
            <person name="Jado I."/>
            <person name="Fenoll A."/>
            <person name="Cepeda T."/>
            <person name="Casal J."/>
            <person name="Perez A."/>
        </authorList>
    </citation>
    <scope>NUCLEOTIDE SEQUENCE [GENOMIC DNA]</scope>
</reference>
<reference key="2">
    <citation type="journal article" date="2001" name="J. Bacteriol.">
        <title>Genome of the bacterium Streptococcus pneumoniae strain R6.</title>
        <authorList>
            <person name="Hoskins J."/>
            <person name="Alborn W.E. Jr."/>
            <person name="Arnold J."/>
            <person name="Blaszczak L.C."/>
            <person name="Burgett S."/>
            <person name="DeHoff B.S."/>
            <person name="Estrem S.T."/>
            <person name="Fritz L."/>
            <person name="Fu D.-J."/>
            <person name="Fuller W."/>
            <person name="Geringer C."/>
            <person name="Gilmour R."/>
            <person name="Glass J.S."/>
            <person name="Khoja H."/>
            <person name="Kraft A.R."/>
            <person name="Lagace R.E."/>
            <person name="LeBlanc D.J."/>
            <person name="Lee L.N."/>
            <person name="Lefkowitz E.J."/>
            <person name="Lu J."/>
            <person name="Matsushima P."/>
            <person name="McAhren S.M."/>
            <person name="McHenney M."/>
            <person name="McLeaster K."/>
            <person name="Mundy C.W."/>
            <person name="Nicas T.I."/>
            <person name="Norris F.H."/>
            <person name="O'Gara M."/>
            <person name="Peery R.B."/>
            <person name="Robertson G.T."/>
            <person name="Rockey P."/>
            <person name="Sun P.-M."/>
            <person name="Winkler M.E."/>
            <person name="Yang Y."/>
            <person name="Young-Bellido M."/>
            <person name="Zhao G."/>
            <person name="Zook C.A."/>
            <person name="Baltz R.H."/>
            <person name="Jaskunas S.R."/>
            <person name="Rosteck P.R. Jr."/>
            <person name="Skatrud P.L."/>
            <person name="Glass J.I."/>
        </authorList>
    </citation>
    <scope>NUCLEOTIDE SEQUENCE [LARGE SCALE GENOMIC DNA]</scope>
    <source>
        <strain>ATCC BAA-255 / R6</strain>
    </source>
</reference>
<reference key="3">
    <citation type="journal article" date="2005" name="FEBS J.">
        <title>Characterization of a eukaryotic type serine/threonine protein kinase and protein phosphatase of Streptococcus pneumoniae and identification of kinase substrates.</title>
        <authorList>
            <person name="Novakova L."/>
            <person name="Saskova L."/>
            <person name="Pallova P."/>
            <person name="Janecek J."/>
            <person name="Novotna J."/>
            <person name="Ulrych A."/>
            <person name="Echenique J."/>
            <person name="Trombe M.C."/>
            <person name="Branny P."/>
        </authorList>
    </citation>
    <scope>PHOSPHORYLATION</scope>
    <scope>IDENTIFICATION BY MASS SPECTROMETRY</scope>
</reference>
<accession>P0A4S2</accession>
<accession>O65944</accession>
<gene>
    <name type="primary">fba</name>
    <name type="ordered locus">spr0530</name>
</gene>
<keyword id="KW-0324">Glycolysis</keyword>
<keyword id="KW-0456">Lyase</keyword>
<keyword id="KW-0479">Metal-binding</keyword>
<keyword id="KW-0597">Phosphoprotein</keyword>
<keyword id="KW-1185">Reference proteome</keyword>
<keyword id="KW-0862">Zinc</keyword>
<organism>
    <name type="scientific">Streptococcus pneumoniae (strain ATCC BAA-255 / R6)</name>
    <dbReference type="NCBI Taxonomy" id="171101"/>
    <lineage>
        <taxon>Bacteria</taxon>
        <taxon>Bacillati</taxon>
        <taxon>Bacillota</taxon>
        <taxon>Bacilli</taxon>
        <taxon>Lactobacillales</taxon>
        <taxon>Streptococcaceae</taxon>
        <taxon>Streptococcus</taxon>
    </lineage>
</organism>
<comment type="function">
    <text evidence="1">Catalyzes the aldol condensation of dihydroxyacetone phosphate (DHAP or glycerone-phosphate) with glyceraldehyde 3-phosphate (G3P) to form fructose 1,6-bisphosphate (FBP) in gluconeogenesis and the reverse reaction in glycolysis.</text>
</comment>
<comment type="catalytic activity">
    <reaction>
        <text>beta-D-fructose 1,6-bisphosphate = D-glyceraldehyde 3-phosphate + dihydroxyacetone phosphate</text>
        <dbReference type="Rhea" id="RHEA:14729"/>
        <dbReference type="ChEBI" id="CHEBI:32966"/>
        <dbReference type="ChEBI" id="CHEBI:57642"/>
        <dbReference type="ChEBI" id="CHEBI:59776"/>
        <dbReference type="EC" id="4.1.2.13"/>
    </reaction>
</comment>
<comment type="cofactor">
    <cofactor evidence="1">
        <name>Zn(2+)</name>
        <dbReference type="ChEBI" id="CHEBI:29105"/>
    </cofactor>
    <text evidence="1">Binds 2 Zn(2+) ions per subunit. One is catalytic and the other provides a structural contribution.</text>
</comment>
<comment type="pathway">
    <text>Carbohydrate degradation; glycolysis; D-glyceraldehyde 3-phosphate and glycerone phosphate from D-glucose: step 4/4.</text>
</comment>
<comment type="PTM">
    <text evidence="2">Phosphorylated.</text>
</comment>
<comment type="similarity">
    <text evidence="3">Belongs to the class II fructose-bisphosphate aldolase family.</text>
</comment>